<comment type="mass spectrometry" mass="3563.684" method="Electrospray" evidence="1"/>
<accession>C0HJV1</accession>
<keyword id="KW-0027">Amidation</keyword>
<keyword id="KW-0903">Direct protein sequencing</keyword>
<keyword id="KW-1015">Disulfide bond</keyword>
<feature type="peptide" id="PRO_0000434017" description="Calcitonin-like peptide 2" evidence="1">
    <location>
        <begin position="1"/>
        <end position="34"/>
    </location>
</feature>
<feature type="modified residue" description="Phenylalanine amide" evidence="1">
    <location>
        <position position="34"/>
    </location>
</feature>
<feature type="disulfide bond" evidence="1">
    <location>
        <begin position="2"/>
        <end position="7"/>
    </location>
</feature>
<evidence type="ECO:0000269" key="1">
    <source ref="1"/>
</evidence>
<evidence type="ECO:0000303" key="2">
    <source ref="1"/>
</evidence>
<evidence type="ECO:0000305" key="3"/>
<organism evidence="2">
    <name type="scientific">Odorrana schmackeri</name>
    <name type="common">Schmacker's frog</name>
    <name type="synonym">Rana schmackeri</name>
    <dbReference type="NCBI Taxonomy" id="110116"/>
    <lineage>
        <taxon>Eukaryota</taxon>
        <taxon>Metazoa</taxon>
        <taxon>Chordata</taxon>
        <taxon>Craniata</taxon>
        <taxon>Vertebrata</taxon>
        <taxon>Euteleostomi</taxon>
        <taxon>Amphibia</taxon>
        <taxon>Batrachia</taxon>
        <taxon>Anura</taxon>
        <taxon>Neobatrachia</taxon>
        <taxon>Ranoidea</taxon>
        <taxon>Ranidae</taxon>
        <taxon>Odorrana</taxon>
    </lineage>
</organism>
<dbReference type="SMR" id="C0HJV1"/>
<dbReference type="GO" id="GO:0005576">
    <property type="term" value="C:extracellular region"/>
    <property type="evidence" value="ECO:0007669"/>
    <property type="project" value="InterPro"/>
</dbReference>
<dbReference type="GO" id="GO:0005179">
    <property type="term" value="F:hormone activity"/>
    <property type="evidence" value="ECO:0007669"/>
    <property type="project" value="InterPro"/>
</dbReference>
<dbReference type="InterPro" id="IPR021116">
    <property type="entry name" value="Calcitonin/adrenomedullin"/>
</dbReference>
<dbReference type="Pfam" id="PF00214">
    <property type="entry name" value="Calc_CGRP_IAPP"/>
    <property type="match status" value="1"/>
</dbReference>
<proteinExistence type="evidence at protein level"/>
<protein>
    <recommendedName>
        <fullName evidence="2">Calcitonin-like peptide 2</fullName>
        <shortName evidence="2">OsCTLP-2</shortName>
    </recommendedName>
</protein>
<sequence length="34" mass="3569">SCNLSTCATHNLVNELNKFDKSKPSSGGVGPESF</sequence>
<reference evidence="3" key="1">
    <citation type="journal article" date="2015" name="EuPA Open Proteomics">
        <title>De novo sequencing of two novel peptides homologous to calcitonin-like peptides, from skin secretion of the Chinese Frog, Odorrana schmackeri.</title>
        <authorList>
            <person name="Evaristo G.P.C."/>
            <person name="Pinkse M.W.H."/>
            <person name="Chen T."/>
            <person name="Wang L."/>
            <person name="Mohammed S."/>
            <person name="Heck A.J.R."/>
            <person name="Mathes I."/>
            <person name="Lottspeich F."/>
            <person name="Shaw C."/>
            <person name="Albar J.P."/>
            <person name="Verhaert P.D.E.M."/>
        </authorList>
    </citation>
    <scope>PROTEIN SEQUENCE</scope>
    <scope>DISULFIDE BOND</scope>
    <scope>AMIDATION AT PHE-34</scope>
    <scope>IDENTIFICATION BY MASS SPECTROMETRY</scope>
    <source>
        <tissue evidence="2">Skin secretion</tissue>
    </source>
</reference>
<name>CTLP2_ODOSH</name>